<name>EX7S_LISMH</name>
<organism>
    <name type="scientific">Listeria monocytogenes serotype 4a (strain HCC23)</name>
    <dbReference type="NCBI Taxonomy" id="552536"/>
    <lineage>
        <taxon>Bacteria</taxon>
        <taxon>Bacillati</taxon>
        <taxon>Bacillota</taxon>
        <taxon>Bacilli</taxon>
        <taxon>Bacillales</taxon>
        <taxon>Listeriaceae</taxon>
        <taxon>Listeria</taxon>
    </lineage>
</organism>
<feature type="chain" id="PRO_1000200256" description="Exodeoxyribonuclease 7 small subunit">
    <location>
        <begin position="1"/>
        <end position="75"/>
    </location>
</feature>
<dbReference type="EC" id="3.1.11.6" evidence="1"/>
<dbReference type="EMBL" id="CP001175">
    <property type="protein sequence ID" value="ACK39556.1"/>
    <property type="molecule type" value="Genomic_DNA"/>
</dbReference>
<dbReference type="RefSeq" id="WP_003722489.1">
    <property type="nucleotide sequence ID" value="NC_011660.1"/>
</dbReference>
<dbReference type="SMR" id="B8DFW6"/>
<dbReference type="KEGG" id="lmh:LMHCC_1209"/>
<dbReference type="HOGENOM" id="CLU_145918_3_1_9"/>
<dbReference type="GO" id="GO:0005829">
    <property type="term" value="C:cytosol"/>
    <property type="evidence" value="ECO:0007669"/>
    <property type="project" value="TreeGrafter"/>
</dbReference>
<dbReference type="GO" id="GO:0009318">
    <property type="term" value="C:exodeoxyribonuclease VII complex"/>
    <property type="evidence" value="ECO:0007669"/>
    <property type="project" value="InterPro"/>
</dbReference>
<dbReference type="GO" id="GO:0008855">
    <property type="term" value="F:exodeoxyribonuclease VII activity"/>
    <property type="evidence" value="ECO:0007669"/>
    <property type="project" value="UniProtKB-UniRule"/>
</dbReference>
<dbReference type="GO" id="GO:0006308">
    <property type="term" value="P:DNA catabolic process"/>
    <property type="evidence" value="ECO:0007669"/>
    <property type="project" value="UniProtKB-UniRule"/>
</dbReference>
<dbReference type="FunFam" id="1.10.287.1040:FF:000008">
    <property type="entry name" value="Exodeoxyribonuclease 7 small subunit"/>
    <property type="match status" value="1"/>
</dbReference>
<dbReference type="Gene3D" id="1.10.287.1040">
    <property type="entry name" value="Exonuclease VII, small subunit"/>
    <property type="match status" value="1"/>
</dbReference>
<dbReference type="HAMAP" id="MF_00337">
    <property type="entry name" value="Exonuc_7_S"/>
    <property type="match status" value="1"/>
</dbReference>
<dbReference type="InterPro" id="IPR003761">
    <property type="entry name" value="Exonuc_VII_S"/>
</dbReference>
<dbReference type="InterPro" id="IPR037004">
    <property type="entry name" value="Exonuc_VII_ssu_sf"/>
</dbReference>
<dbReference type="NCBIfam" id="NF002138">
    <property type="entry name" value="PRK00977.1-2"/>
    <property type="match status" value="1"/>
</dbReference>
<dbReference type="NCBIfam" id="NF002139">
    <property type="entry name" value="PRK00977.1-3"/>
    <property type="match status" value="1"/>
</dbReference>
<dbReference type="NCBIfam" id="NF002140">
    <property type="entry name" value="PRK00977.1-4"/>
    <property type="match status" value="1"/>
</dbReference>
<dbReference type="NCBIfam" id="NF010667">
    <property type="entry name" value="PRK14064.1"/>
    <property type="match status" value="1"/>
</dbReference>
<dbReference type="NCBIfam" id="TIGR01280">
    <property type="entry name" value="xseB"/>
    <property type="match status" value="1"/>
</dbReference>
<dbReference type="PANTHER" id="PTHR34137">
    <property type="entry name" value="EXODEOXYRIBONUCLEASE 7 SMALL SUBUNIT"/>
    <property type="match status" value="1"/>
</dbReference>
<dbReference type="PANTHER" id="PTHR34137:SF1">
    <property type="entry name" value="EXODEOXYRIBONUCLEASE 7 SMALL SUBUNIT"/>
    <property type="match status" value="1"/>
</dbReference>
<dbReference type="Pfam" id="PF02609">
    <property type="entry name" value="Exonuc_VII_S"/>
    <property type="match status" value="1"/>
</dbReference>
<dbReference type="PIRSF" id="PIRSF006488">
    <property type="entry name" value="Exonuc_VII_S"/>
    <property type="match status" value="1"/>
</dbReference>
<dbReference type="SUPFAM" id="SSF116842">
    <property type="entry name" value="XseB-like"/>
    <property type="match status" value="1"/>
</dbReference>
<comment type="function">
    <text evidence="1">Bidirectionally degrades single-stranded DNA into large acid-insoluble oligonucleotides, which are then degraded further into small acid-soluble oligonucleotides.</text>
</comment>
<comment type="catalytic activity">
    <reaction evidence="1">
        <text>Exonucleolytic cleavage in either 5'- to 3'- or 3'- to 5'-direction to yield nucleoside 5'-phosphates.</text>
        <dbReference type="EC" id="3.1.11.6"/>
    </reaction>
</comment>
<comment type="subunit">
    <text evidence="1">Heterooligomer composed of large and small subunits.</text>
</comment>
<comment type="subcellular location">
    <subcellularLocation>
        <location evidence="1">Cytoplasm</location>
    </subcellularLocation>
</comment>
<comment type="similarity">
    <text evidence="1">Belongs to the XseB family.</text>
</comment>
<gene>
    <name evidence="1" type="primary">xseB</name>
    <name type="ordered locus">LMHCC_1209</name>
</gene>
<sequence>MATKKKTFEEAIAELETIVEALENGSASLEDSLDMYQKGIELTKLCQDKLQSAEKRMAKVVTDAGEEIPFEADGE</sequence>
<evidence type="ECO:0000255" key="1">
    <source>
        <dbReference type="HAMAP-Rule" id="MF_00337"/>
    </source>
</evidence>
<protein>
    <recommendedName>
        <fullName evidence="1">Exodeoxyribonuclease 7 small subunit</fullName>
        <ecNumber evidence="1">3.1.11.6</ecNumber>
    </recommendedName>
    <alternativeName>
        <fullName evidence="1">Exodeoxyribonuclease VII small subunit</fullName>
        <shortName evidence="1">Exonuclease VII small subunit</shortName>
    </alternativeName>
</protein>
<proteinExistence type="inferred from homology"/>
<keyword id="KW-0963">Cytoplasm</keyword>
<keyword id="KW-0269">Exonuclease</keyword>
<keyword id="KW-0378">Hydrolase</keyword>
<keyword id="KW-0540">Nuclease</keyword>
<accession>B8DFW6</accession>
<reference key="1">
    <citation type="journal article" date="2011" name="J. Bacteriol.">
        <title>Genome sequence of lineage III Listeria monocytogenes strain HCC23.</title>
        <authorList>
            <person name="Steele C.L."/>
            <person name="Donaldson J.R."/>
            <person name="Paul D."/>
            <person name="Banes M.M."/>
            <person name="Arick T."/>
            <person name="Bridges S.M."/>
            <person name="Lawrence M.L."/>
        </authorList>
    </citation>
    <scope>NUCLEOTIDE SEQUENCE [LARGE SCALE GENOMIC DNA]</scope>
    <source>
        <strain>HCC23</strain>
    </source>
</reference>